<feature type="chain" id="PRO_0000331878" description="Methionine--tRNA ligase">
    <location>
        <begin position="1"/>
        <end position="700"/>
    </location>
</feature>
<feature type="domain" description="tRNA-binding" evidence="1">
    <location>
        <begin position="598"/>
        <end position="700"/>
    </location>
</feature>
<feature type="short sequence motif" description="'HIGH' region">
    <location>
        <begin position="13"/>
        <end position="23"/>
    </location>
</feature>
<feature type="short sequence motif" description="'KMSKS' region">
    <location>
        <begin position="341"/>
        <end position="345"/>
    </location>
</feature>
<feature type="binding site" evidence="1">
    <location>
        <position position="144"/>
    </location>
    <ligand>
        <name>Zn(2+)</name>
        <dbReference type="ChEBI" id="CHEBI:29105"/>
    </ligand>
</feature>
<feature type="binding site" evidence="1">
    <location>
        <position position="147"/>
    </location>
    <ligand>
        <name>Zn(2+)</name>
        <dbReference type="ChEBI" id="CHEBI:29105"/>
    </ligand>
</feature>
<feature type="binding site" evidence="1">
    <location>
        <position position="157"/>
    </location>
    <ligand>
        <name>Zn(2+)</name>
        <dbReference type="ChEBI" id="CHEBI:29105"/>
    </ligand>
</feature>
<feature type="binding site" evidence="1">
    <location>
        <position position="160"/>
    </location>
    <ligand>
        <name>Zn(2+)</name>
        <dbReference type="ChEBI" id="CHEBI:29105"/>
    </ligand>
</feature>
<feature type="binding site" evidence="1">
    <location>
        <position position="344"/>
    </location>
    <ligand>
        <name>ATP</name>
        <dbReference type="ChEBI" id="CHEBI:30616"/>
    </ligand>
</feature>
<gene>
    <name evidence="1" type="primary">metG</name>
    <name type="ordered locus">Psyc_1432</name>
</gene>
<proteinExistence type="inferred from homology"/>
<reference key="1">
    <citation type="journal article" date="2010" name="Appl. Environ. Microbiol.">
        <title>The genome sequence of Psychrobacter arcticus 273-4, a psychroactive Siberian permafrost bacterium, reveals mechanisms for adaptation to low-temperature growth.</title>
        <authorList>
            <person name="Ayala-del-Rio H.L."/>
            <person name="Chain P.S."/>
            <person name="Grzymski J.J."/>
            <person name="Ponder M.A."/>
            <person name="Ivanova N."/>
            <person name="Bergholz P.W."/>
            <person name="Di Bartolo G."/>
            <person name="Hauser L."/>
            <person name="Land M."/>
            <person name="Bakermans C."/>
            <person name="Rodrigues D."/>
            <person name="Klappenbach J."/>
            <person name="Zarka D."/>
            <person name="Larimer F."/>
            <person name="Richardson P."/>
            <person name="Murray A."/>
            <person name="Thomashow M."/>
            <person name="Tiedje J.M."/>
        </authorList>
    </citation>
    <scope>NUCLEOTIDE SEQUENCE [LARGE SCALE GENOMIC DNA]</scope>
    <source>
        <strain>DSM 17307 / VKM B-2377 / 273-4</strain>
    </source>
</reference>
<dbReference type="EC" id="6.1.1.10" evidence="1"/>
<dbReference type="EMBL" id="CP000082">
    <property type="protein sequence ID" value="AAZ19280.1"/>
    <property type="molecule type" value="Genomic_DNA"/>
</dbReference>
<dbReference type="RefSeq" id="WP_011280700.1">
    <property type="nucleotide sequence ID" value="NC_007204.1"/>
</dbReference>
<dbReference type="SMR" id="Q4FRS8"/>
<dbReference type="STRING" id="259536.Psyc_1432"/>
<dbReference type="KEGG" id="par:Psyc_1432"/>
<dbReference type="eggNOG" id="COG0073">
    <property type="taxonomic scope" value="Bacteria"/>
</dbReference>
<dbReference type="eggNOG" id="COG0143">
    <property type="taxonomic scope" value="Bacteria"/>
</dbReference>
<dbReference type="HOGENOM" id="CLU_009710_7_0_6"/>
<dbReference type="OrthoDB" id="9810191at2"/>
<dbReference type="Proteomes" id="UP000000546">
    <property type="component" value="Chromosome"/>
</dbReference>
<dbReference type="GO" id="GO:0005829">
    <property type="term" value="C:cytosol"/>
    <property type="evidence" value="ECO:0007669"/>
    <property type="project" value="TreeGrafter"/>
</dbReference>
<dbReference type="GO" id="GO:0005524">
    <property type="term" value="F:ATP binding"/>
    <property type="evidence" value="ECO:0007669"/>
    <property type="project" value="UniProtKB-UniRule"/>
</dbReference>
<dbReference type="GO" id="GO:0046872">
    <property type="term" value="F:metal ion binding"/>
    <property type="evidence" value="ECO:0007669"/>
    <property type="project" value="UniProtKB-KW"/>
</dbReference>
<dbReference type="GO" id="GO:0004825">
    <property type="term" value="F:methionine-tRNA ligase activity"/>
    <property type="evidence" value="ECO:0007669"/>
    <property type="project" value="UniProtKB-UniRule"/>
</dbReference>
<dbReference type="GO" id="GO:0000049">
    <property type="term" value="F:tRNA binding"/>
    <property type="evidence" value="ECO:0007669"/>
    <property type="project" value="UniProtKB-KW"/>
</dbReference>
<dbReference type="GO" id="GO:0006431">
    <property type="term" value="P:methionyl-tRNA aminoacylation"/>
    <property type="evidence" value="ECO:0007669"/>
    <property type="project" value="UniProtKB-UniRule"/>
</dbReference>
<dbReference type="CDD" id="cd07957">
    <property type="entry name" value="Anticodon_Ia_Met"/>
    <property type="match status" value="1"/>
</dbReference>
<dbReference type="CDD" id="cd00814">
    <property type="entry name" value="MetRS_core"/>
    <property type="match status" value="1"/>
</dbReference>
<dbReference type="CDD" id="cd02800">
    <property type="entry name" value="tRNA_bind_EcMetRS_like"/>
    <property type="match status" value="1"/>
</dbReference>
<dbReference type="FunFam" id="1.10.730.10:FF:000005">
    <property type="entry name" value="Methionine--tRNA ligase"/>
    <property type="match status" value="1"/>
</dbReference>
<dbReference type="FunFam" id="2.20.28.20:FF:000001">
    <property type="entry name" value="Methionine--tRNA ligase"/>
    <property type="match status" value="1"/>
</dbReference>
<dbReference type="FunFam" id="2.40.50.140:FF:000042">
    <property type="entry name" value="Methionine--tRNA ligase"/>
    <property type="match status" value="1"/>
</dbReference>
<dbReference type="Gene3D" id="3.40.50.620">
    <property type="entry name" value="HUPs"/>
    <property type="match status" value="1"/>
</dbReference>
<dbReference type="Gene3D" id="1.10.730.10">
    <property type="entry name" value="Isoleucyl-tRNA Synthetase, Domain 1"/>
    <property type="match status" value="1"/>
</dbReference>
<dbReference type="Gene3D" id="2.20.28.20">
    <property type="entry name" value="Methionyl-tRNA synthetase, Zn-domain"/>
    <property type="match status" value="1"/>
</dbReference>
<dbReference type="Gene3D" id="2.40.50.140">
    <property type="entry name" value="Nucleic acid-binding proteins"/>
    <property type="match status" value="1"/>
</dbReference>
<dbReference type="HAMAP" id="MF_00098">
    <property type="entry name" value="Met_tRNA_synth_type1"/>
    <property type="match status" value="1"/>
</dbReference>
<dbReference type="InterPro" id="IPR001412">
    <property type="entry name" value="aa-tRNA-synth_I_CS"/>
</dbReference>
<dbReference type="InterPro" id="IPR041872">
    <property type="entry name" value="Anticodon_Met"/>
</dbReference>
<dbReference type="InterPro" id="IPR013155">
    <property type="entry name" value="M/V/L/I-tRNA-synth_anticd-bd"/>
</dbReference>
<dbReference type="InterPro" id="IPR004495">
    <property type="entry name" value="Met-tRNA-synth_bsu_C"/>
</dbReference>
<dbReference type="InterPro" id="IPR023458">
    <property type="entry name" value="Met-tRNA_ligase_1"/>
</dbReference>
<dbReference type="InterPro" id="IPR014758">
    <property type="entry name" value="Met-tRNA_synth"/>
</dbReference>
<dbReference type="InterPro" id="IPR015413">
    <property type="entry name" value="Methionyl/Leucyl_tRNA_Synth"/>
</dbReference>
<dbReference type="InterPro" id="IPR033911">
    <property type="entry name" value="MetRS_core"/>
</dbReference>
<dbReference type="InterPro" id="IPR029038">
    <property type="entry name" value="MetRS_Zn"/>
</dbReference>
<dbReference type="InterPro" id="IPR012340">
    <property type="entry name" value="NA-bd_OB-fold"/>
</dbReference>
<dbReference type="InterPro" id="IPR014729">
    <property type="entry name" value="Rossmann-like_a/b/a_fold"/>
</dbReference>
<dbReference type="InterPro" id="IPR002547">
    <property type="entry name" value="tRNA-bd_dom"/>
</dbReference>
<dbReference type="InterPro" id="IPR009080">
    <property type="entry name" value="tRNAsynth_Ia_anticodon-bd"/>
</dbReference>
<dbReference type="NCBIfam" id="TIGR00398">
    <property type="entry name" value="metG"/>
    <property type="match status" value="1"/>
</dbReference>
<dbReference type="NCBIfam" id="TIGR00399">
    <property type="entry name" value="metG_C_term"/>
    <property type="match status" value="1"/>
</dbReference>
<dbReference type="NCBIfam" id="NF001100">
    <property type="entry name" value="PRK00133.1"/>
    <property type="match status" value="1"/>
</dbReference>
<dbReference type="PANTHER" id="PTHR45765">
    <property type="entry name" value="METHIONINE--TRNA LIGASE"/>
    <property type="match status" value="1"/>
</dbReference>
<dbReference type="PANTHER" id="PTHR45765:SF1">
    <property type="entry name" value="METHIONINE--TRNA LIGASE, CYTOPLASMIC"/>
    <property type="match status" value="1"/>
</dbReference>
<dbReference type="Pfam" id="PF08264">
    <property type="entry name" value="Anticodon_1"/>
    <property type="match status" value="1"/>
</dbReference>
<dbReference type="Pfam" id="PF09334">
    <property type="entry name" value="tRNA-synt_1g"/>
    <property type="match status" value="1"/>
</dbReference>
<dbReference type="Pfam" id="PF01588">
    <property type="entry name" value="tRNA_bind"/>
    <property type="match status" value="1"/>
</dbReference>
<dbReference type="PRINTS" id="PR01041">
    <property type="entry name" value="TRNASYNTHMET"/>
</dbReference>
<dbReference type="SUPFAM" id="SSF47323">
    <property type="entry name" value="Anticodon-binding domain of a subclass of class I aminoacyl-tRNA synthetases"/>
    <property type="match status" value="1"/>
</dbReference>
<dbReference type="SUPFAM" id="SSF57770">
    <property type="entry name" value="Methionyl-tRNA synthetase (MetRS), Zn-domain"/>
    <property type="match status" value="1"/>
</dbReference>
<dbReference type="SUPFAM" id="SSF50249">
    <property type="entry name" value="Nucleic acid-binding proteins"/>
    <property type="match status" value="1"/>
</dbReference>
<dbReference type="SUPFAM" id="SSF52374">
    <property type="entry name" value="Nucleotidylyl transferase"/>
    <property type="match status" value="1"/>
</dbReference>
<dbReference type="PROSITE" id="PS00178">
    <property type="entry name" value="AA_TRNA_LIGASE_I"/>
    <property type="match status" value="1"/>
</dbReference>
<dbReference type="PROSITE" id="PS50886">
    <property type="entry name" value="TRBD"/>
    <property type="match status" value="1"/>
</dbReference>
<keyword id="KW-0030">Aminoacyl-tRNA synthetase</keyword>
<keyword id="KW-0067">ATP-binding</keyword>
<keyword id="KW-0963">Cytoplasm</keyword>
<keyword id="KW-0436">Ligase</keyword>
<keyword id="KW-0479">Metal-binding</keyword>
<keyword id="KW-0547">Nucleotide-binding</keyword>
<keyword id="KW-0648">Protein biosynthesis</keyword>
<keyword id="KW-1185">Reference proteome</keyword>
<keyword id="KW-0694">RNA-binding</keyword>
<keyword id="KW-0820">tRNA-binding</keyword>
<keyword id="KW-0862">Zinc</keyword>
<accession>Q4FRS8</accession>
<organism>
    <name type="scientific">Psychrobacter arcticus (strain DSM 17307 / VKM B-2377 / 273-4)</name>
    <dbReference type="NCBI Taxonomy" id="259536"/>
    <lineage>
        <taxon>Bacteria</taxon>
        <taxon>Pseudomonadati</taxon>
        <taxon>Pseudomonadota</taxon>
        <taxon>Gammaproteobacteria</taxon>
        <taxon>Moraxellales</taxon>
        <taxon>Moraxellaceae</taxon>
        <taxon>Psychrobacter</taxon>
    </lineage>
</organism>
<name>SYM_PSYA2</name>
<sequence length="700" mass="78989">MKVREILVTSALPYANGDIHLGHLVEYIQTDIWVRSMKAQGHKVTYVCADDAHGTAIMLKAEDNGVTPEQQIANVQAAHEADFAKFLINFDNYHSTHSEENREFSELIYRRLRDTGHISTRDVEQLFDPEKQLFLADRFVKGTCPECAAPDQYGDNCEVCGTTYDATELKDPYSTLSNATPILKTSKHYFFDLPEFEQFLKDWTRSDNRLQVSVANKLQEWFDAGLTSWDISRDAPYFGFQIPDTPSDEPDKYFYVWLDAPVGYMASFKNLCDKRAGTDDALDFDHYWAQENEHKTEVYHFIGKDIVYFHALFWPAMLAGSELRTPTAVFAHGFLMVNGEKMSKSRGTFIKADTYAEHLHPEYLRYYFASKLSDKVEDINLDLEDFMQKVNSDLVGKVVNIASRSAGFLLKKYDGMLTDVCAEPSLLEDITKTGDEIAAAYENREFSRAMRLIMQCADKANEYIDEKKPWALAKVEGAEQEVQDVCSVAINIFRQLMVYLAPVLPELTANAKEFLNINDLSFASRNEWLLGHQINKFKPLMQRIDEKDVAAMVDASKASLTQVDAPTASQDDKMVAKNTAPAATPSSTEQADYIGIEDFAKVEMKVAHVIACSYVEGADKLLQFTLDVGEAQPRNVFSGIRKFYEPEQLLDKKVICVTNLAPRKMKFGISEGMILSSGDPKTQLTVVTLPDNCVIGDLLA</sequence>
<protein>
    <recommendedName>
        <fullName evidence="1">Methionine--tRNA ligase</fullName>
        <ecNumber evidence="1">6.1.1.10</ecNumber>
    </recommendedName>
    <alternativeName>
        <fullName evidence="1">Methionyl-tRNA synthetase</fullName>
        <shortName evidence="1">MetRS</shortName>
    </alternativeName>
</protein>
<comment type="function">
    <text evidence="1">Is required not only for elongation of protein synthesis but also for the initiation of all mRNA translation through initiator tRNA(fMet) aminoacylation.</text>
</comment>
<comment type="catalytic activity">
    <reaction evidence="1">
        <text>tRNA(Met) + L-methionine + ATP = L-methionyl-tRNA(Met) + AMP + diphosphate</text>
        <dbReference type="Rhea" id="RHEA:13481"/>
        <dbReference type="Rhea" id="RHEA-COMP:9667"/>
        <dbReference type="Rhea" id="RHEA-COMP:9698"/>
        <dbReference type="ChEBI" id="CHEBI:30616"/>
        <dbReference type="ChEBI" id="CHEBI:33019"/>
        <dbReference type="ChEBI" id="CHEBI:57844"/>
        <dbReference type="ChEBI" id="CHEBI:78442"/>
        <dbReference type="ChEBI" id="CHEBI:78530"/>
        <dbReference type="ChEBI" id="CHEBI:456215"/>
        <dbReference type="EC" id="6.1.1.10"/>
    </reaction>
</comment>
<comment type="cofactor">
    <cofactor evidence="1">
        <name>Zn(2+)</name>
        <dbReference type="ChEBI" id="CHEBI:29105"/>
    </cofactor>
    <text evidence="1">Binds 1 zinc ion per subunit.</text>
</comment>
<comment type="subunit">
    <text evidence="1">Homodimer.</text>
</comment>
<comment type="subcellular location">
    <subcellularLocation>
        <location evidence="1">Cytoplasm</location>
    </subcellularLocation>
</comment>
<comment type="similarity">
    <text evidence="1">Belongs to the class-I aminoacyl-tRNA synthetase family. MetG type 1 subfamily.</text>
</comment>
<evidence type="ECO:0000255" key="1">
    <source>
        <dbReference type="HAMAP-Rule" id="MF_00098"/>
    </source>
</evidence>